<dbReference type="EMBL" id="CP001396">
    <property type="protein sequence ID" value="ACR65041.1"/>
    <property type="molecule type" value="Genomic_DNA"/>
</dbReference>
<dbReference type="RefSeq" id="WP_001216963.1">
    <property type="nucleotide sequence ID" value="NC_012759.1"/>
</dbReference>
<dbReference type="KEGG" id="ebw:BWG_1911"/>
<dbReference type="HOGENOM" id="CLU_220259_0_0_6"/>
<dbReference type="GO" id="GO:0005886">
    <property type="term" value="C:plasma membrane"/>
    <property type="evidence" value="ECO:0007669"/>
    <property type="project" value="UniProtKB-SubCell"/>
</dbReference>
<dbReference type="HAMAP" id="MF_01362">
    <property type="entry name" value="UPF0387"/>
    <property type="match status" value="1"/>
</dbReference>
<dbReference type="InterPro" id="IPR020870">
    <property type="entry name" value="UPF0387_membrane"/>
</dbReference>
<dbReference type="NCBIfam" id="NF010225">
    <property type="entry name" value="PRK13681.1"/>
    <property type="match status" value="1"/>
</dbReference>
<evidence type="ECO:0000255" key="1">
    <source>
        <dbReference type="HAMAP-Rule" id="MF_01362"/>
    </source>
</evidence>
<feature type="chain" id="PRO_1000214879" description="UPF0387 membrane protein YohO">
    <location>
        <begin position="1"/>
        <end position="35"/>
    </location>
</feature>
<feature type="transmembrane region" description="Helical" evidence="1">
    <location>
        <begin position="6"/>
        <end position="26"/>
    </location>
</feature>
<gene>
    <name evidence="1" type="primary">yohO</name>
    <name type="ordered locus">BWG_1911</name>
</gene>
<protein>
    <recommendedName>
        <fullName evidence="1">UPF0387 membrane protein YohO</fullName>
    </recommendedName>
</protein>
<keyword id="KW-0997">Cell inner membrane</keyword>
<keyword id="KW-1003">Cell membrane</keyword>
<keyword id="KW-0472">Membrane</keyword>
<keyword id="KW-0812">Transmembrane</keyword>
<keyword id="KW-1133">Transmembrane helix</keyword>
<organism>
    <name type="scientific">Escherichia coli (strain K12 / MC4100 / BW2952)</name>
    <dbReference type="NCBI Taxonomy" id="595496"/>
    <lineage>
        <taxon>Bacteria</taxon>
        <taxon>Pseudomonadati</taxon>
        <taxon>Pseudomonadota</taxon>
        <taxon>Gammaproteobacteria</taxon>
        <taxon>Enterobacterales</taxon>
        <taxon>Enterobacteriaceae</taxon>
        <taxon>Escherichia</taxon>
    </lineage>
</organism>
<comment type="subcellular location">
    <subcellularLocation>
        <location evidence="1">Cell inner membrane</location>
        <topology evidence="1">Single-pass membrane protein</topology>
    </subcellularLocation>
</comment>
<comment type="similarity">
    <text evidence="1">Belongs to the UPF0387 family.</text>
</comment>
<reference key="1">
    <citation type="journal article" date="2009" name="J. Bacteriol.">
        <title>Genomic sequencing reveals regulatory mutations and recombinational events in the widely used MC4100 lineage of Escherichia coli K-12.</title>
        <authorList>
            <person name="Ferenci T."/>
            <person name="Zhou Z."/>
            <person name="Betteridge T."/>
            <person name="Ren Y."/>
            <person name="Liu Y."/>
            <person name="Feng L."/>
            <person name="Reeves P.R."/>
            <person name="Wang L."/>
        </authorList>
    </citation>
    <scope>NUCLEOTIDE SEQUENCE [LARGE SCALE GENOMIC DNA]</scope>
    <source>
        <strain>K12 / MC4100 / BW2952</strain>
    </source>
</reference>
<sequence>MRIAKIGVIALFLFMALGGIGGVMLAGYTFILRAG</sequence>
<accession>C4ZSK9</accession>
<name>YOHO_ECOBW</name>
<proteinExistence type="inferred from homology"/>